<evidence type="ECO:0000255" key="1"/>
<evidence type="ECO:0000255" key="2">
    <source>
        <dbReference type="PROSITE-ProRule" id="PRU00498"/>
    </source>
</evidence>
<evidence type="ECO:0000255" key="3">
    <source>
        <dbReference type="PROSITE-ProRule" id="PRU01240"/>
    </source>
</evidence>
<evidence type="ECO:0000269" key="4">
    <source>
    </source>
</evidence>
<evidence type="ECO:0000269" key="5">
    <source>
    </source>
</evidence>
<evidence type="ECO:0000269" key="6">
    <source>
    </source>
</evidence>
<evidence type="ECO:0000269" key="7">
    <source>
    </source>
</evidence>
<evidence type="ECO:0000303" key="8">
    <source>
    </source>
</evidence>
<evidence type="ECO:0000303" key="9">
    <source>
    </source>
</evidence>
<evidence type="ECO:0000305" key="10"/>
<evidence type="ECO:0000305" key="11">
    <source>
    </source>
</evidence>
<evidence type="ECO:0000305" key="12">
    <source>
    </source>
</evidence>
<evidence type="ECO:0000312" key="13">
    <source>
        <dbReference type="Araport" id="AT5G19660"/>
    </source>
</evidence>
<protein>
    <recommendedName>
        <fullName evidence="8">Subtilisin-like protease SBT6.1</fullName>
        <ecNumber evidence="10">3.4.21.-</ecNumber>
    </recommendedName>
    <alternativeName>
        <fullName evidence="9">Site-1 protease</fullName>
        <shortName evidence="9">AtS1P</shortName>
    </alternativeName>
    <alternativeName>
        <fullName evidence="8">Subtilase subfamily 6 member 1</fullName>
        <shortName evidence="8">AtSBT6.1</shortName>
    </alternativeName>
</protein>
<reference key="1">
    <citation type="journal article" date="2000" name="Nature">
        <title>Sequence and analysis of chromosome 5 of the plant Arabidopsis thaliana.</title>
        <authorList>
            <person name="Tabata S."/>
            <person name="Kaneko T."/>
            <person name="Nakamura Y."/>
            <person name="Kotani H."/>
            <person name="Kato T."/>
            <person name="Asamizu E."/>
            <person name="Miyajima N."/>
            <person name="Sasamoto S."/>
            <person name="Kimura T."/>
            <person name="Hosouchi T."/>
            <person name="Kawashima K."/>
            <person name="Kohara M."/>
            <person name="Matsumoto M."/>
            <person name="Matsuno A."/>
            <person name="Muraki A."/>
            <person name="Nakayama S."/>
            <person name="Nakazaki N."/>
            <person name="Naruo K."/>
            <person name="Okumura S."/>
            <person name="Shinpo S."/>
            <person name="Takeuchi C."/>
            <person name="Wada T."/>
            <person name="Watanabe A."/>
            <person name="Yamada M."/>
            <person name="Yasuda M."/>
            <person name="Sato S."/>
            <person name="de la Bastide M."/>
            <person name="Huang E."/>
            <person name="Spiegel L."/>
            <person name="Gnoj L."/>
            <person name="O'Shaughnessy A."/>
            <person name="Preston R."/>
            <person name="Habermann K."/>
            <person name="Murray J."/>
            <person name="Johnson D."/>
            <person name="Rohlfing T."/>
            <person name="Nelson J."/>
            <person name="Stoneking T."/>
            <person name="Pepin K."/>
            <person name="Spieth J."/>
            <person name="Sekhon M."/>
            <person name="Armstrong J."/>
            <person name="Becker M."/>
            <person name="Belter E."/>
            <person name="Cordum H."/>
            <person name="Cordes M."/>
            <person name="Courtney L."/>
            <person name="Courtney W."/>
            <person name="Dante M."/>
            <person name="Du H."/>
            <person name="Edwards J."/>
            <person name="Fryman J."/>
            <person name="Haakensen B."/>
            <person name="Lamar E."/>
            <person name="Latreille P."/>
            <person name="Leonard S."/>
            <person name="Meyer R."/>
            <person name="Mulvaney E."/>
            <person name="Ozersky P."/>
            <person name="Riley A."/>
            <person name="Strowmatt C."/>
            <person name="Wagner-McPherson C."/>
            <person name="Wollam A."/>
            <person name="Yoakum M."/>
            <person name="Bell M."/>
            <person name="Dedhia N."/>
            <person name="Parnell L."/>
            <person name="Shah R."/>
            <person name="Rodriguez M."/>
            <person name="Hoon See L."/>
            <person name="Vil D."/>
            <person name="Baker J."/>
            <person name="Kirchoff K."/>
            <person name="Toth K."/>
            <person name="King L."/>
            <person name="Bahret A."/>
            <person name="Miller B."/>
            <person name="Marra M.A."/>
            <person name="Martienssen R."/>
            <person name="McCombie W.R."/>
            <person name="Wilson R.K."/>
            <person name="Murphy G."/>
            <person name="Bancroft I."/>
            <person name="Volckaert G."/>
            <person name="Wambutt R."/>
            <person name="Duesterhoeft A."/>
            <person name="Stiekema W."/>
            <person name="Pohl T."/>
            <person name="Entian K.-D."/>
            <person name="Terryn N."/>
            <person name="Hartley N."/>
            <person name="Bent E."/>
            <person name="Johnson S."/>
            <person name="Langham S.-A."/>
            <person name="McCullagh B."/>
            <person name="Robben J."/>
            <person name="Grymonprez B."/>
            <person name="Zimmermann W."/>
            <person name="Ramsperger U."/>
            <person name="Wedler H."/>
            <person name="Balke K."/>
            <person name="Wedler E."/>
            <person name="Peters S."/>
            <person name="van Staveren M."/>
            <person name="Dirkse W."/>
            <person name="Mooijman P."/>
            <person name="Klein Lankhorst R."/>
            <person name="Weitzenegger T."/>
            <person name="Bothe G."/>
            <person name="Rose M."/>
            <person name="Hauf J."/>
            <person name="Berneiser S."/>
            <person name="Hempel S."/>
            <person name="Feldpausch M."/>
            <person name="Lamberth S."/>
            <person name="Villarroel R."/>
            <person name="Gielen J."/>
            <person name="Ardiles W."/>
            <person name="Bents O."/>
            <person name="Lemcke K."/>
            <person name="Kolesov G."/>
            <person name="Mayer K.F.X."/>
            <person name="Rudd S."/>
            <person name="Schoof H."/>
            <person name="Schueller C."/>
            <person name="Zaccaria P."/>
            <person name="Mewes H.-W."/>
            <person name="Bevan M."/>
            <person name="Fransz P.F."/>
        </authorList>
    </citation>
    <scope>NUCLEOTIDE SEQUENCE [LARGE SCALE GENOMIC DNA]</scope>
    <source>
        <strain>cv. Columbia</strain>
    </source>
</reference>
<reference key="2">
    <citation type="journal article" date="2017" name="Plant J.">
        <title>Araport11: a complete reannotation of the Arabidopsis thaliana reference genome.</title>
        <authorList>
            <person name="Cheng C.Y."/>
            <person name="Krishnakumar V."/>
            <person name="Chan A.P."/>
            <person name="Thibaud-Nissen F."/>
            <person name="Schobel S."/>
            <person name="Town C.D."/>
        </authorList>
    </citation>
    <scope>GENOME REANNOTATION</scope>
    <source>
        <strain>cv. Columbia</strain>
    </source>
</reference>
<reference key="3">
    <citation type="journal article" date="2003" name="Science">
        <title>Empirical analysis of transcriptional activity in the Arabidopsis genome.</title>
        <authorList>
            <person name="Yamada K."/>
            <person name="Lim J."/>
            <person name="Dale J.M."/>
            <person name="Chen H."/>
            <person name="Shinn P."/>
            <person name="Palm C.J."/>
            <person name="Southwick A.M."/>
            <person name="Wu H.C."/>
            <person name="Kim C.J."/>
            <person name="Nguyen M."/>
            <person name="Pham P.K."/>
            <person name="Cheuk R.F."/>
            <person name="Karlin-Newmann G."/>
            <person name="Liu S.X."/>
            <person name="Lam B."/>
            <person name="Sakano H."/>
            <person name="Wu T."/>
            <person name="Yu G."/>
            <person name="Miranda M."/>
            <person name="Quach H.L."/>
            <person name="Tripp M."/>
            <person name="Chang C.H."/>
            <person name="Lee J.M."/>
            <person name="Toriumi M.J."/>
            <person name="Chan M.M."/>
            <person name="Tang C.C."/>
            <person name="Onodera C.S."/>
            <person name="Deng J.M."/>
            <person name="Akiyama K."/>
            <person name="Ansari Y."/>
            <person name="Arakawa T."/>
            <person name="Banh J."/>
            <person name="Banno F."/>
            <person name="Bowser L."/>
            <person name="Brooks S.Y."/>
            <person name="Carninci P."/>
            <person name="Chao Q."/>
            <person name="Choy N."/>
            <person name="Enju A."/>
            <person name="Goldsmith A.D."/>
            <person name="Gurjal M."/>
            <person name="Hansen N.F."/>
            <person name="Hayashizaki Y."/>
            <person name="Johnson-Hopson C."/>
            <person name="Hsuan V.W."/>
            <person name="Iida K."/>
            <person name="Karnes M."/>
            <person name="Khan S."/>
            <person name="Koesema E."/>
            <person name="Ishida J."/>
            <person name="Jiang P.X."/>
            <person name="Jones T."/>
            <person name="Kawai J."/>
            <person name="Kamiya A."/>
            <person name="Meyers C."/>
            <person name="Nakajima M."/>
            <person name="Narusaka M."/>
            <person name="Seki M."/>
            <person name="Sakurai T."/>
            <person name="Satou M."/>
            <person name="Tamse R."/>
            <person name="Vaysberg M."/>
            <person name="Wallender E.K."/>
            <person name="Wong C."/>
            <person name="Yamamura Y."/>
            <person name="Yuan S."/>
            <person name="Shinozaki K."/>
            <person name="Davis R.W."/>
            <person name="Theologis A."/>
            <person name="Ecker J.R."/>
        </authorList>
    </citation>
    <scope>NUCLEOTIDE SEQUENCE [LARGE SCALE MRNA]</scope>
    <source>
        <strain>cv. Columbia</strain>
    </source>
</reference>
<reference key="4">
    <citation type="submission" date="2006-07" db="EMBL/GenBank/DDBJ databases">
        <title>Large-scale analysis of RIKEN Arabidopsis full-length (RAFL) cDNAs.</title>
        <authorList>
            <person name="Totoki Y."/>
            <person name="Seki M."/>
            <person name="Ishida J."/>
            <person name="Nakajima M."/>
            <person name="Enju A."/>
            <person name="Kamiya A."/>
            <person name="Narusaka M."/>
            <person name="Shin-i T."/>
            <person name="Nakagawa M."/>
            <person name="Sakamoto N."/>
            <person name="Oishi K."/>
            <person name="Kohara Y."/>
            <person name="Kobayashi M."/>
            <person name="Toyoda A."/>
            <person name="Sakaki Y."/>
            <person name="Sakurai T."/>
            <person name="Iida K."/>
            <person name="Akiyama K."/>
            <person name="Satou M."/>
            <person name="Toyoda T."/>
            <person name="Konagaya A."/>
            <person name="Carninci P."/>
            <person name="Kawai J."/>
            <person name="Hayashizaki Y."/>
            <person name="Shinozaki K."/>
        </authorList>
    </citation>
    <scope>NUCLEOTIDE SEQUENCE [LARGE SCALE MRNA]</scope>
    <source>
        <strain>cv. Columbia</strain>
    </source>
</reference>
<reference key="5">
    <citation type="journal article" date="2005" name="PLoS Comput. Biol.">
        <title>Inferring hypotheses on functional relationships of genes: Analysis of the Arabidopsis thaliana subtilase gene family.</title>
        <authorList>
            <person name="Rautengarten C."/>
            <person name="Steinhauser D."/>
            <person name="Bussis D."/>
            <person name="Stintzi A."/>
            <person name="Schaller A."/>
            <person name="Kopka J."/>
            <person name="Altmann T."/>
        </authorList>
    </citation>
    <scope>GENE FAMILY</scope>
    <scope>NOMENCLATURE</scope>
</reference>
<reference key="6">
    <citation type="journal article" date="2007" name="Plant J.">
        <title>Salt stress responses in Arabidopsis utilize a signal transduction pathway related to endoplasmic reticulum stress signaling.</title>
        <authorList>
            <person name="Liu J.X."/>
            <person name="Srivastava R."/>
            <person name="Che P."/>
            <person name="Howell S.H."/>
        </authorList>
    </citation>
    <scope>FUNCTION</scope>
    <scope>SUBCELLULAR LOCATION</scope>
    <scope>TISSUE SPECIFICITY</scope>
    <scope>DISRUPTION PHENOTYPE</scope>
</reference>
<reference key="7">
    <citation type="journal article" date="2009" name="Plant J.">
        <title>The N-terminal pro region mediates retention of unprocessed type-I PME in the Golgi apparatus.</title>
        <authorList>
            <person name="Wolf S."/>
            <person name="Rausch T."/>
            <person name="Greiner S."/>
        </authorList>
    </citation>
    <scope>FUNCTION</scope>
    <scope>INTERACTION WITH PME1 AND PME5</scope>
</reference>
<reference key="8">
    <citation type="journal article" date="2009" name="Plant J.">
        <title>Regulation and processing of a plant peptide hormone, AtRALF23, in Arabidopsis.</title>
        <authorList>
            <person name="Srivastava R."/>
            <person name="Liu J.-X."/>
            <person name="Guo H."/>
            <person name="Yin Y."/>
            <person name="Howell S.H."/>
        </authorList>
    </citation>
    <scope>FUNCTION</scope>
</reference>
<reference key="9">
    <citation type="journal article" date="2010" name="Sci. Signal.">
        <title>Signaling from the endoplasmic reticulum activates brassinosteroid signaling and promotes acclimation to stress in Arabidopsis.</title>
        <authorList>
            <person name="Che P."/>
            <person name="Bussell J.D."/>
            <person name="Zhou W."/>
            <person name="Estavillo G.M."/>
            <person name="Pogson B.J."/>
            <person name="Smith S.M."/>
        </authorList>
    </citation>
    <scope>SUBCELLULAR LOCATION</scope>
    <scope>TOPOLOGY</scope>
    <scope>TISSUE SPECIFICITY</scope>
    <scope>DISRUPTION PHENOTYPE</scope>
</reference>
<dbReference type="EC" id="3.4.21.-" evidence="10"/>
<dbReference type="EMBL" id="AF296838">
    <property type="status" value="NOT_ANNOTATED_CDS"/>
    <property type="molecule type" value="Genomic_DNA"/>
</dbReference>
<dbReference type="EMBL" id="CP002688">
    <property type="protein sequence ID" value="AED92735.1"/>
    <property type="molecule type" value="Genomic_DNA"/>
</dbReference>
<dbReference type="EMBL" id="AY136354">
    <property type="protein sequence ID" value="AAM97020.1"/>
    <property type="molecule type" value="mRNA"/>
</dbReference>
<dbReference type="EMBL" id="AK227193">
    <property type="protein sequence ID" value="BAE99232.1"/>
    <property type="molecule type" value="mRNA"/>
</dbReference>
<dbReference type="RefSeq" id="NP_197467.1">
    <property type="nucleotide sequence ID" value="NM_121971.3"/>
</dbReference>
<dbReference type="SMR" id="Q0WUG6"/>
<dbReference type="FunCoup" id="Q0WUG6">
    <property type="interactions" value="3696"/>
</dbReference>
<dbReference type="STRING" id="3702.Q0WUG6"/>
<dbReference type="MEROPS" id="S08.063"/>
<dbReference type="GlyCosmos" id="Q0WUG6">
    <property type="glycosylation" value="10 sites, No reported glycans"/>
</dbReference>
<dbReference type="GlyGen" id="Q0WUG6">
    <property type="glycosylation" value="11 sites"/>
</dbReference>
<dbReference type="PaxDb" id="3702-AT5G19660.1"/>
<dbReference type="ProteomicsDB" id="232794"/>
<dbReference type="EnsemblPlants" id="AT5G19660.1">
    <property type="protein sequence ID" value="AT5G19660.1"/>
    <property type="gene ID" value="AT5G19660"/>
</dbReference>
<dbReference type="GeneID" id="832086"/>
<dbReference type="Gramene" id="AT5G19660.1">
    <property type="protein sequence ID" value="AT5G19660.1"/>
    <property type="gene ID" value="AT5G19660"/>
</dbReference>
<dbReference type="KEGG" id="ath:AT5G19660"/>
<dbReference type="Araport" id="AT5G19660"/>
<dbReference type="TAIR" id="AT5G19660">
    <property type="gene designation" value="S1P"/>
</dbReference>
<dbReference type="eggNOG" id="KOG4266">
    <property type="taxonomic scope" value="Eukaryota"/>
</dbReference>
<dbReference type="HOGENOM" id="CLU_004504_2_0_1"/>
<dbReference type="InParanoid" id="Q0WUG6"/>
<dbReference type="OMA" id="LEYTTTG"/>
<dbReference type="PhylomeDB" id="Q0WUG6"/>
<dbReference type="PRO" id="PR:Q0WUG6"/>
<dbReference type="Proteomes" id="UP000006548">
    <property type="component" value="Chromosome 5"/>
</dbReference>
<dbReference type="ExpressionAtlas" id="Q0WUG6">
    <property type="expression patterns" value="baseline and differential"/>
</dbReference>
<dbReference type="GO" id="GO:0005794">
    <property type="term" value="C:Golgi apparatus"/>
    <property type="evidence" value="ECO:0000314"/>
    <property type="project" value="TAIR"/>
</dbReference>
<dbReference type="GO" id="GO:0000139">
    <property type="term" value="C:Golgi membrane"/>
    <property type="evidence" value="ECO:0007669"/>
    <property type="project" value="UniProtKB-SubCell"/>
</dbReference>
<dbReference type="GO" id="GO:0004175">
    <property type="term" value="F:endopeptidase activity"/>
    <property type="evidence" value="ECO:0000314"/>
    <property type="project" value="TAIR"/>
</dbReference>
<dbReference type="GO" id="GO:0004252">
    <property type="term" value="F:serine-type endopeptidase activity"/>
    <property type="evidence" value="ECO:0007669"/>
    <property type="project" value="InterPro"/>
</dbReference>
<dbReference type="GO" id="GO:0006972">
    <property type="term" value="P:hyperosmotic response"/>
    <property type="evidence" value="ECO:0000315"/>
    <property type="project" value="TAIR"/>
</dbReference>
<dbReference type="GO" id="GO:0042538">
    <property type="term" value="P:hyperosmotic salinity response"/>
    <property type="evidence" value="ECO:0000315"/>
    <property type="project" value="TAIR"/>
</dbReference>
<dbReference type="GO" id="GO:0006508">
    <property type="term" value="P:proteolysis"/>
    <property type="evidence" value="ECO:0000314"/>
    <property type="project" value="TAIR"/>
</dbReference>
<dbReference type="CDD" id="cd07479">
    <property type="entry name" value="Peptidases_S8_SKI-1_like"/>
    <property type="match status" value="1"/>
</dbReference>
<dbReference type="FunFam" id="3.40.50.200:FF:000011">
    <property type="entry name" value="subtilisin-like protease SBT6.1"/>
    <property type="match status" value="1"/>
</dbReference>
<dbReference type="Gene3D" id="3.40.50.200">
    <property type="entry name" value="Peptidase S8/S53 domain"/>
    <property type="match status" value="1"/>
</dbReference>
<dbReference type="InterPro" id="IPR055143">
    <property type="entry name" value="MBTP1_N"/>
</dbReference>
<dbReference type="InterPro" id="IPR057060">
    <property type="entry name" value="MBTPS1_3rd"/>
</dbReference>
<dbReference type="InterPro" id="IPR057032">
    <property type="entry name" value="MBTPS1_4th"/>
</dbReference>
<dbReference type="InterPro" id="IPR000209">
    <property type="entry name" value="Peptidase_S8/S53_dom"/>
</dbReference>
<dbReference type="InterPro" id="IPR036852">
    <property type="entry name" value="Peptidase_S8/S53_dom_sf"/>
</dbReference>
<dbReference type="InterPro" id="IPR022398">
    <property type="entry name" value="Peptidase_S8_His-AS"/>
</dbReference>
<dbReference type="InterPro" id="IPR023828">
    <property type="entry name" value="Peptidase_S8_Ser-AS"/>
</dbReference>
<dbReference type="InterPro" id="IPR050131">
    <property type="entry name" value="Peptidase_S8_subtilisin-like"/>
</dbReference>
<dbReference type="InterPro" id="IPR015500">
    <property type="entry name" value="Peptidase_S8_subtilisin-rel"/>
</dbReference>
<dbReference type="InterPro" id="IPR034185">
    <property type="entry name" value="Site-1_peptidase_cat_dom"/>
</dbReference>
<dbReference type="PANTHER" id="PTHR43806:SF7">
    <property type="entry name" value="MEMBRANE-BOUND TRANSCRIPTION FACTOR SITE-1 PROTEASE"/>
    <property type="match status" value="1"/>
</dbReference>
<dbReference type="PANTHER" id="PTHR43806">
    <property type="entry name" value="PEPTIDASE S8"/>
    <property type="match status" value="1"/>
</dbReference>
<dbReference type="Pfam" id="PF23001">
    <property type="entry name" value="MBTP1_N"/>
    <property type="match status" value="1"/>
</dbReference>
<dbReference type="Pfam" id="PF23094">
    <property type="entry name" value="MBTPS1_3rd"/>
    <property type="match status" value="1"/>
</dbReference>
<dbReference type="Pfam" id="PF23090">
    <property type="entry name" value="MBTPS1_4th"/>
    <property type="match status" value="1"/>
</dbReference>
<dbReference type="Pfam" id="PF00082">
    <property type="entry name" value="Peptidase_S8"/>
    <property type="match status" value="1"/>
</dbReference>
<dbReference type="PRINTS" id="PR00723">
    <property type="entry name" value="SUBTILISIN"/>
</dbReference>
<dbReference type="SUPFAM" id="SSF52743">
    <property type="entry name" value="Subtilisin-like"/>
    <property type="match status" value="1"/>
</dbReference>
<dbReference type="PROSITE" id="PS51892">
    <property type="entry name" value="SUBTILASE"/>
    <property type="match status" value="1"/>
</dbReference>
<dbReference type="PROSITE" id="PS00137">
    <property type="entry name" value="SUBTILASE_HIS"/>
    <property type="match status" value="1"/>
</dbReference>
<dbReference type="PROSITE" id="PS00138">
    <property type="entry name" value="SUBTILASE_SER"/>
    <property type="match status" value="1"/>
</dbReference>
<accession>Q0WUG6</accession>
<accession>Q8L7B7</accession>
<comment type="function">
    <text evidence="4 5 6">Serine protease that catalyzes the first step (site-1 cleavage) in the proteolytic activation of various factors, prior to site-2 cleavage. Part of a regulated intramembrane proteolysis (RIP) cascade. Cleaves BZIP17 and BZIP28 after the Arg-Arg-Ile-Leu (RRIL) motif. May cleave BZIP49 after the RRIL motif. Targets the membrane-associated BZIP17 factor, which functions as a stress sensor and transducer in a signaling pathway that resembles an ER stress response. Following salt stress, BZIP17 is cleaved by SBT6.1 (S1P) and S2P at the C-terminus and the N-terminal bZIP component is translocated to the nucleus, where it activates the expression of salt stress response genes (PubMed:17662035). Cleaves the pectinesterases PME1 after the Arg-Arg-Leu-Met (RRLM) and Arg-Arg-Leu-Leu (RRLL) motifs, and PME5 after the Arg-Arg-Leu-Leu (RRLL) and Arg-Lys-Leu-Met (RKLM) motifs. This processing and C-terminus release occurs in the Golgi apparatus and is required for cell wall targeting of pectinesterases. Thus, SBT6.1 mediates the regulated release of mature pectinesterases from the Golgi (PubMed:19144003). Cleaves the peptide growth factor RALF23 after the Arg-Arg-Ile-Leu (RRIL) motif. This processing is required for RALF23 function in the negative regulation of brassinolide (BL)-mediated signaling pathway (e.g. BL-induced hypocotyl elongation and branching limitation) (PubMed:19473327).</text>
</comment>
<comment type="subunit">
    <text evidence="5">Interacts with PME1 and PME5.</text>
</comment>
<comment type="subcellular location">
    <subcellularLocation>
        <location evidence="11 12">Golgi apparatus membrane</location>
        <topology evidence="1">Single-pass membrane protein</topology>
    </subcellularLocation>
</comment>
<comment type="tissue specificity">
    <text evidence="4 7">Expressed in the vasculature of roots, cotyledons and leaves.</text>
</comment>
<comment type="disruption phenotype">
    <text evidence="4 7">Short root (PubMed:20876872). Mutant plants have increased sensitivity to salt-induced osmotic stress (PubMed:17662035).</text>
</comment>
<comment type="similarity">
    <text evidence="10">Belongs to the peptidase S8 family.</text>
</comment>
<organism>
    <name type="scientific">Arabidopsis thaliana</name>
    <name type="common">Mouse-ear cress</name>
    <dbReference type="NCBI Taxonomy" id="3702"/>
    <lineage>
        <taxon>Eukaryota</taxon>
        <taxon>Viridiplantae</taxon>
        <taxon>Streptophyta</taxon>
        <taxon>Embryophyta</taxon>
        <taxon>Tracheophyta</taxon>
        <taxon>Spermatophyta</taxon>
        <taxon>Magnoliopsida</taxon>
        <taxon>eudicotyledons</taxon>
        <taxon>Gunneridae</taxon>
        <taxon>Pentapetalae</taxon>
        <taxon>rosids</taxon>
        <taxon>malvids</taxon>
        <taxon>Brassicales</taxon>
        <taxon>Brassicaceae</taxon>
        <taxon>Camelineae</taxon>
        <taxon>Arabidopsis</taxon>
    </lineage>
</organism>
<gene>
    <name evidence="8" type="primary">SBT6.1</name>
    <name evidence="10" type="synonym">S1P</name>
    <name evidence="13" type="ordered locus">At5g19660</name>
</gene>
<feature type="signal peptide" evidence="1">
    <location>
        <begin position="1"/>
        <end position="30"/>
    </location>
</feature>
<feature type="propeptide" id="PRO_0000431968" description="Removed in mature form" evidence="11">
    <location>
        <begin position="31"/>
        <end position="181"/>
    </location>
</feature>
<feature type="chain" id="PRO_0000431969" description="Subtilisin-like protease SBT6.1" evidence="1">
    <location>
        <begin position="182"/>
        <end position="1038"/>
    </location>
</feature>
<feature type="topological domain" description="Lumenal" evidence="12">
    <location>
        <begin position="182"/>
        <end position="1000"/>
    </location>
</feature>
<feature type="transmembrane region" description="Helical" evidence="1">
    <location>
        <begin position="1001"/>
        <end position="1021"/>
    </location>
</feature>
<feature type="topological domain" description="Cytoplasmic" evidence="12">
    <location>
        <begin position="1022"/>
        <end position="1038"/>
    </location>
</feature>
<feature type="domain" description="Peptidase S8" evidence="3">
    <location>
        <begin position="175"/>
        <end position="473"/>
    </location>
</feature>
<feature type="active site" description="Charge relay system" evidence="3">
    <location>
        <position position="212"/>
    </location>
</feature>
<feature type="active site" description="Charge relay system" evidence="3">
    <location>
        <position position="243"/>
    </location>
</feature>
<feature type="active site" description="Charge relay system" evidence="3">
    <location>
        <position position="409"/>
    </location>
</feature>
<feature type="glycosylation site" description="N-linked (GlcNAc...) asparagine" evidence="2">
    <location>
        <position position="44"/>
    </location>
</feature>
<feature type="glycosylation site" description="N-linked (GlcNAc...) asparagine" evidence="2">
    <location>
        <position position="52"/>
    </location>
</feature>
<feature type="glycosylation site" description="N-linked (GlcNAc...) asparagine" evidence="2">
    <location>
        <position position="171"/>
    </location>
</feature>
<feature type="glycosylation site" description="N-linked (GlcNAc...) asparagine" evidence="2">
    <location>
        <position position="175"/>
    </location>
</feature>
<feature type="glycosylation site" description="N-linked (GlcNAc...) asparagine" evidence="2">
    <location>
        <position position="230"/>
    </location>
</feature>
<feature type="glycosylation site" description="N-linked (GlcNAc...) asparagine" evidence="2">
    <location>
        <position position="300"/>
    </location>
</feature>
<feature type="glycosylation site" description="N-linked (GlcNAc...) asparagine" evidence="2">
    <location>
        <position position="513"/>
    </location>
</feature>
<feature type="glycosylation site" description="N-linked (GlcNAc...) asparagine" evidence="2">
    <location>
        <position position="579"/>
    </location>
</feature>
<feature type="glycosylation site" description="N-linked (GlcNAc...) asparagine" evidence="2">
    <location>
        <position position="902"/>
    </location>
</feature>
<feature type="glycosylation site" description="N-linked (GlcNAc...) asparagine" evidence="2">
    <location>
        <position position="954"/>
    </location>
</feature>
<feature type="sequence conflict" description="In Ref. 3; AAM97020." evidence="10" ref="3">
    <original>A</original>
    <variation>S</variation>
    <location>
        <position position="429"/>
    </location>
</feature>
<name>SBT61_ARATH</name>
<sequence>MKVLGEASSYPYRSCIIVVFLSVSLFWLRPSTYHPQQQNLNPENVTRLESENETKTNYIIRFKQYKPAKDHRIYLESKVRSGGWGWIERINPATKYPTDFGVLWIEESGKEAVVGEIERLEMVKDVNVEFKYQRVLLGGSFPDGKKRPGKIFTSMSFEEGTESSPMADTSNTTLNWSRHLLAQKTQVTSMFGADHLWKKGYTGAKVKMAIFDTGIRADHPHFRKIKERTNWTNEDTLNDNLGHGTFVAGVIAGRNPECLGFASDTEIYAFRVFTDAQVSYTSWFLDAFNYAIATDMDVLNLSIGGPDYLDLPFVEKVWEITASNIIMVSAIGNDGPLYGTLNNPADQSDVIGVGGIDNDDHIASFSSRGMSTWELPHGYGRVKPDVVAYGRDIMGSKISTGCKSLSGTSVASPVVAGIVCLLVSVIPEARRKDLLNPASMKQALVEGAAKLSGPNMYEQGAGRVDLLESYEILKSYHPRASIFPSILDYNDCPYSWPFCRQPLYAGAMPIIFNTTILNGMGVIGYIESPPTWHPANEEGNLLSIHFKYPDVIWPWTGYLALHMQIKEEGAQFTGEIEGNVTVKVYSPPASGESGPRRSTCSLQLKLKVIPTPPRAKRILWDQFHSIKYPPGYIPRDSLDVRNDILDWHGDHLHTNFHIMYNMLRDAGYYIETLGSPLTCFDAQQYGTLLMVDLEDDYFPEEIEKLRDDVINTGLGLVVFAEWYNVDTMVKMRFFDDNTRSWWTPVTGGANIPALNNLLASFGIAFGDKILNGDFSIDGEQSRYASGTNIVRFPAGGFLHTFPLLDSSESGATQNLLLTEASKEDPAVLGLLEIGEGRVGVYGDSNCLDSSHMVTNCYWLLKKMLDFSSSNIKDPVLFSKFAKRYSPVIIDEKQLPSRRTDVNFSTYSSVIGKELICESDSRFEVWGTKGYNLHVRGRNRRLPGYHGIDLGRGLNFTVESKRPTRWRSAKEGGELSSSRSKSLGGLFNRDEIDMPFLVPTRWIVLAGVVASGVLVLLSIWRIRQKRGRRRRASGSNRLA</sequence>
<keyword id="KW-0325">Glycoprotein</keyword>
<keyword id="KW-0333">Golgi apparatus</keyword>
<keyword id="KW-0378">Hydrolase</keyword>
<keyword id="KW-0472">Membrane</keyword>
<keyword id="KW-0645">Protease</keyword>
<keyword id="KW-1185">Reference proteome</keyword>
<keyword id="KW-0720">Serine protease</keyword>
<keyword id="KW-0732">Signal</keyword>
<keyword id="KW-0812">Transmembrane</keyword>
<keyword id="KW-1133">Transmembrane helix</keyword>
<proteinExistence type="evidence at protein level"/>